<organism>
    <name type="scientific">Staphylococcus aureus (strain N315)</name>
    <dbReference type="NCBI Taxonomy" id="158879"/>
    <lineage>
        <taxon>Bacteria</taxon>
        <taxon>Bacillati</taxon>
        <taxon>Bacillota</taxon>
        <taxon>Bacilli</taxon>
        <taxon>Bacillales</taxon>
        <taxon>Staphylococcaceae</taxon>
        <taxon>Staphylococcus</taxon>
    </lineage>
</organism>
<sequence length="705" mass="77857">MSKQRIYEYAKELNLKSKEIIDELKSMNIEVSNHMQALEDDQIKALDKKFKKEQKNDNKQSTQNNHQKSNNQNQNKGQQKDNKKNQQQNNKGNKGNKKNNRNNKKNNKNNKPQNQPAAPKEIPSKVTYQEGITVGEFADKLNVESSEIIKKLFLLGIVANINQSLNQETIELIADDYGVEVEEEVVINEEDLSIYFEDEKDDPEAIERPAVVTIMGHVDHGKTTLLDSIRHTKVTAGEAGGITQHIGAYQIENDGKKITFLDTPGHAAFTTMRARGAQVTDITILVVAADDGVMPQTIEAINHAKEAEVPIIVAVNKIDKPTSNPDRVMQELTEYGLIPEDWGGETIFVPLSALSGDGIDDLLEMIGLVAEVQELKANPKNRAVGTVIEAELDKSRGPSASLLVQNGTLNVGDAIVVGNTYGRIRAMVNDLGQRIKTAGPSTPVEITGINDVPQAGDRFVVFSDEKQARRIGESRHEASIVQQRQESKNVSLDNLFEQMKQGEMKDLNVIIKGDVQGSVEALAASLMKIDVEGVNVRIIHTAVGAINESDVTLANASNGIIIGFNVRPDSGAKRAAEAENVDMRLHRVIYNVIEEIESAMKGLLDPEFEEQVIGQAEVRQTFKVSKVGTIAGCYVTEGKITRNAGVRIIRDGIVQYEGELDTLKRFKDDAKEVAKGYECGITIENYNDLKEGDVIEAFEMVEIKR</sequence>
<evidence type="ECO:0000250" key="1"/>
<evidence type="ECO:0000255" key="2">
    <source>
        <dbReference type="HAMAP-Rule" id="MF_00100"/>
    </source>
</evidence>
<evidence type="ECO:0000256" key="3">
    <source>
        <dbReference type="SAM" id="MobiDB-lite"/>
    </source>
</evidence>
<gene>
    <name evidence="2" type="primary">infB</name>
    <name type="ordered locus">SA1112</name>
</gene>
<name>IF2_STAAN</name>
<reference key="1">
    <citation type="journal article" date="2001" name="Lancet">
        <title>Whole genome sequencing of meticillin-resistant Staphylococcus aureus.</title>
        <authorList>
            <person name="Kuroda M."/>
            <person name="Ohta T."/>
            <person name="Uchiyama I."/>
            <person name="Baba T."/>
            <person name="Yuzawa H."/>
            <person name="Kobayashi I."/>
            <person name="Cui L."/>
            <person name="Oguchi A."/>
            <person name="Aoki K."/>
            <person name="Nagai Y."/>
            <person name="Lian J.-Q."/>
            <person name="Ito T."/>
            <person name="Kanamori M."/>
            <person name="Matsumaru H."/>
            <person name="Maruyama A."/>
            <person name="Murakami H."/>
            <person name="Hosoyama A."/>
            <person name="Mizutani-Ui Y."/>
            <person name="Takahashi N.K."/>
            <person name="Sawano T."/>
            <person name="Inoue R."/>
            <person name="Kaito C."/>
            <person name="Sekimizu K."/>
            <person name="Hirakawa H."/>
            <person name="Kuhara S."/>
            <person name="Goto S."/>
            <person name="Yabuzaki J."/>
            <person name="Kanehisa M."/>
            <person name="Yamashita A."/>
            <person name="Oshima K."/>
            <person name="Furuya K."/>
            <person name="Yoshino C."/>
            <person name="Shiba T."/>
            <person name="Hattori M."/>
            <person name="Ogasawara N."/>
            <person name="Hayashi H."/>
            <person name="Hiramatsu K."/>
        </authorList>
    </citation>
    <scope>NUCLEOTIDE SEQUENCE [LARGE SCALE GENOMIC DNA]</scope>
    <source>
        <strain>N315</strain>
    </source>
</reference>
<reference key="2">
    <citation type="submission" date="2007-10" db="UniProtKB">
        <title>Shotgun proteomic analysis of total and membrane protein extracts of S. aureus strain N315.</title>
        <authorList>
            <person name="Vaezzadeh A.R."/>
            <person name="Deshusses J."/>
            <person name="Lescuyer P."/>
            <person name="Hochstrasser D.F."/>
        </authorList>
    </citation>
    <scope>IDENTIFICATION BY MASS SPECTROMETRY [LARGE SCALE ANALYSIS]</scope>
    <source>
        <strain>N315</strain>
    </source>
</reference>
<comment type="function">
    <text evidence="2">One of the essential components for the initiation of protein synthesis. Protects formylmethionyl-tRNA from spontaneous hydrolysis and promotes its binding to the 30S ribosomal subunits. Also involved in the hydrolysis of GTP during the formation of the 70S ribosomal complex.</text>
</comment>
<comment type="subcellular location">
    <subcellularLocation>
        <location evidence="2">Cytoplasm</location>
    </subcellularLocation>
</comment>
<comment type="similarity">
    <text evidence="2">Belongs to the TRAFAC class translation factor GTPase superfamily. Classic translation factor GTPase family. IF-2 subfamily.</text>
</comment>
<proteinExistence type="evidence at protein level"/>
<feature type="chain" id="PRO_0000137250" description="Translation initiation factor IF-2">
    <location>
        <begin position="1"/>
        <end position="705"/>
    </location>
</feature>
<feature type="domain" description="tr-type G">
    <location>
        <begin position="207"/>
        <end position="376"/>
    </location>
</feature>
<feature type="region of interest" description="Disordered" evidence="3">
    <location>
        <begin position="40"/>
        <end position="124"/>
    </location>
</feature>
<feature type="region of interest" description="G1" evidence="1">
    <location>
        <begin position="216"/>
        <end position="223"/>
    </location>
</feature>
<feature type="region of interest" description="G2" evidence="1">
    <location>
        <begin position="241"/>
        <end position="245"/>
    </location>
</feature>
<feature type="region of interest" description="G3" evidence="1">
    <location>
        <begin position="262"/>
        <end position="265"/>
    </location>
</feature>
<feature type="region of interest" description="G4" evidence="1">
    <location>
        <begin position="316"/>
        <end position="319"/>
    </location>
</feature>
<feature type="region of interest" description="G5" evidence="1">
    <location>
        <begin position="352"/>
        <end position="354"/>
    </location>
</feature>
<feature type="compositionally biased region" description="Basic and acidic residues" evidence="3">
    <location>
        <begin position="41"/>
        <end position="58"/>
    </location>
</feature>
<feature type="compositionally biased region" description="Low complexity" evidence="3">
    <location>
        <begin position="59"/>
        <end position="77"/>
    </location>
</feature>
<feature type="compositionally biased region" description="Basic residues" evidence="3">
    <location>
        <begin position="94"/>
        <end position="108"/>
    </location>
</feature>
<feature type="binding site" evidence="2">
    <location>
        <begin position="216"/>
        <end position="223"/>
    </location>
    <ligand>
        <name>GTP</name>
        <dbReference type="ChEBI" id="CHEBI:37565"/>
    </ligand>
</feature>
<feature type="binding site" evidence="2">
    <location>
        <begin position="262"/>
        <end position="266"/>
    </location>
    <ligand>
        <name>GTP</name>
        <dbReference type="ChEBI" id="CHEBI:37565"/>
    </ligand>
</feature>
<feature type="binding site" evidence="2">
    <location>
        <begin position="316"/>
        <end position="319"/>
    </location>
    <ligand>
        <name>GTP</name>
        <dbReference type="ChEBI" id="CHEBI:37565"/>
    </ligand>
</feature>
<protein>
    <recommendedName>
        <fullName evidence="2">Translation initiation factor IF-2</fullName>
    </recommendedName>
</protein>
<accession>P65134</accession>
<accession>Q99UK3</accession>
<keyword id="KW-0963">Cytoplasm</keyword>
<keyword id="KW-0342">GTP-binding</keyword>
<keyword id="KW-0396">Initiation factor</keyword>
<keyword id="KW-0547">Nucleotide-binding</keyword>
<keyword id="KW-0648">Protein biosynthesis</keyword>
<dbReference type="EMBL" id="BA000018">
    <property type="protein sequence ID" value="BAB42364.1"/>
    <property type="molecule type" value="Genomic_DNA"/>
</dbReference>
<dbReference type="PIR" id="H89900">
    <property type="entry name" value="H89900"/>
</dbReference>
<dbReference type="RefSeq" id="WP_000043635.1">
    <property type="nucleotide sequence ID" value="NC_002745.2"/>
</dbReference>
<dbReference type="SMR" id="P65134"/>
<dbReference type="EnsemblBacteria" id="BAB42364">
    <property type="protein sequence ID" value="BAB42364"/>
    <property type="gene ID" value="BAB42364"/>
</dbReference>
<dbReference type="KEGG" id="sau:SA1112"/>
<dbReference type="HOGENOM" id="CLU_006301_5_1_9"/>
<dbReference type="GO" id="GO:0005829">
    <property type="term" value="C:cytosol"/>
    <property type="evidence" value="ECO:0007669"/>
    <property type="project" value="TreeGrafter"/>
</dbReference>
<dbReference type="GO" id="GO:0005525">
    <property type="term" value="F:GTP binding"/>
    <property type="evidence" value="ECO:0007669"/>
    <property type="project" value="UniProtKB-KW"/>
</dbReference>
<dbReference type="GO" id="GO:0003924">
    <property type="term" value="F:GTPase activity"/>
    <property type="evidence" value="ECO:0007669"/>
    <property type="project" value="UniProtKB-UniRule"/>
</dbReference>
<dbReference type="GO" id="GO:0003743">
    <property type="term" value="F:translation initiation factor activity"/>
    <property type="evidence" value="ECO:0007669"/>
    <property type="project" value="UniProtKB-UniRule"/>
</dbReference>
<dbReference type="CDD" id="cd01887">
    <property type="entry name" value="IF2_eIF5B"/>
    <property type="match status" value="1"/>
</dbReference>
<dbReference type="CDD" id="cd03702">
    <property type="entry name" value="IF2_mtIF2_II"/>
    <property type="match status" value="1"/>
</dbReference>
<dbReference type="CDD" id="cd03692">
    <property type="entry name" value="mtIF2_IVc"/>
    <property type="match status" value="1"/>
</dbReference>
<dbReference type="FunFam" id="1.10.10.2480:FF:000002">
    <property type="entry name" value="Translation initiation factor IF-2"/>
    <property type="match status" value="1"/>
</dbReference>
<dbReference type="FunFam" id="2.40.30.10:FF:000007">
    <property type="entry name" value="Translation initiation factor IF-2"/>
    <property type="match status" value="1"/>
</dbReference>
<dbReference type="FunFam" id="2.40.30.10:FF:000008">
    <property type="entry name" value="Translation initiation factor IF-2"/>
    <property type="match status" value="1"/>
</dbReference>
<dbReference type="FunFam" id="3.40.50.10050:FF:000001">
    <property type="entry name" value="Translation initiation factor IF-2"/>
    <property type="match status" value="1"/>
</dbReference>
<dbReference type="FunFam" id="3.40.50.300:FF:000019">
    <property type="entry name" value="Translation initiation factor IF-2"/>
    <property type="match status" value="1"/>
</dbReference>
<dbReference type="Gene3D" id="1.10.10.2480">
    <property type="match status" value="1"/>
</dbReference>
<dbReference type="Gene3D" id="3.40.50.300">
    <property type="entry name" value="P-loop containing nucleotide triphosphate hydrolases"/>
    <property type="match status" value="1"/>
</dbReference>
<dbReference type="Gene3D" id="2.40.30.10">
    <property type="entry name" value="Translation factors"/>
    <property type="match status" value="2"/>
</dbReference>
<dbReference type="Gene3D" id="3.40.50.10050">
    <property type="entry name" value="Translation initiation factor IF- 2, domain 3"/>
    <property type="match status" value="1"/>
</dbReference>
<dbReference type="HAMAP" id="MF_00100_B">
    <property type="entry name" value="IF_2_B"/>
    <property type="match status" value="1"/>
</dbReference>
<dbReference type="InterPro" id="IPR053905">
    <property type="entry name" value="EF-G-like_DII"/>
</dbReference>
<dbReference type="InterPro" id="IPR044145">
    <property type="entry name" value="IF2_II"/>
</dbReference>
<dbReference type="InterPro" id="IPR006847">
    <property type="entry name" value="IF2_N"/>
</dbReference>
<dbReference type="InterPro" id="IPR027417">
    <property type="entry name" value="P-loop_NTPase"/>
</dbReference>
<dbReference type="InterPro" id="IPR005225">
    <property type="entry name" value="Small_GTP-bd"/>
</dbReference>
<dbReference type="InterPro" id="IPR000795">
    <property type="entry name" value="T_Tr_GTP-bd_dom"/>
</dbReference>
<dbReference type="InterPro" id="IPR000178">
    <property type="entry name" value="TF_IF2_bacterial-like"/>
</dbReference>
<dbReference type="InterPro" id="IPR015760">
    <property type="entry name" value="TIF_IF2"/>
</dbReference>
<dbReference type="InterPro" id="IPR023115">
    <property type="entry name" value="TIF_IF2_dom3"/>
</dbReference>
<dbReference type="InterPro" id="IPR036925">
    <property type="entry name" value="TIF_IF2_dom3_sf"/>
</dbReference>
<dbReference type="InterPro" id="IPR009000">
    <property type="entry name" value="Transl_B-barrel_sf"/>
</dbReference>
<dbReference type="NCBIfam" id="TIGR00487">
    <property type="entry name" value="IF-2"/>
    <property type="match status" value="1"/>
</dbReference>
<dbReference type="NCBIfam" id="TIGR00231">
    <property type="entry name" value="small_GTP"/>
    <property type="match status" value="1"/>
</dbReference>
<dbReference type="PANTHER" id="PTHR43381:SF5">
    <property type="entry name" value="TR-TYPE G DOMAIN-CONTAINING PROTEIN"/>
    <property type="match status" value="1"/>
</dbReference>
<dbReference type="PANTHER" id="PTHR43381">
    <property type="entry name" value="TRANSLATION INITIATION FACTOR IF-2-RELATED"/>
    <property type="match status" value="1"/>
</dbReference>
<dbReference type="Pfam" id="PF22042">
    <property type="entry name" value="EF-G_D2"/>
    <property type="match status" value="1"/>
</dbReference>
<dbReference type="Pfam" id="PF00009">
    <property type="entry name" value="GTP_EFTU"/>
    <property type="match status" value="1"/>
</dbReference>
<dbReference type="Pfam" id="PF11987">
    <property type="entry name" value="IF-2"/>
    <property type="match status" value="1"/>
</dbReference>
<dbReference type="Pfam" id="PF04760">
    <property type="entry name" value="IF2_N"/>
    <property type="match status" value="2"/>
</dbReference>
<dbReference type="SUPFAM" id="SSF52156">
    <property type="entry name" value="Initiation factor IF2/eIF5b, domain 3"/>
    <property type="match status" value="1"/>
</dbReference>
<dbReference type="SUPFAM" id="SSF52540">
    <property type="entry name" value="P-loop containing nucleoside triphosphate hydrolases"/>
    <property type="match status" value="1"/>
</dbReference>
<dbReference type="SUPFAM" id="SSF50447">
    <property type="entry name" value="Translation proteins"/>
    <property type="match status" value="2"/>
</dbReference>
<dbReference type="PROSITE" id="PS51722">
    <property type="entry name" value="G_TR_2"/>
    <property type="match status" value="1"/>
</dbReference>
<dbReference type="PROSITE" id="PS01176">
    <property type="entry name" value="IF2"/>
    <property type="match status" value="1"/>
</dbReference>